<accession>Q6ZQH8</accession>
<accession>Q4VA15</accession>
<accession>Q80UL4</accession>
<accession>Q8C7A1</accession>
<accession>Q8R3F1</accession>
<proteinExistence type="evidence at protein level"/>
<dbReference type="EMBL" id="AK129073">
    <property type="protein sequence ID" value="BAC97883.1"/>
    <property type="status" value="ALT_INIT"/>
    <property type="molecule type" value="mRNA"/>
</dbReference>
<dbReference type="EMBL" id="AL954388">
    <property type="status" value="NOT_ANNOTATED_CDS"/>
    <property type="molecule type" value="Genomic_DNA"/>
</dbReference>
<dbReference type="EMBL" id="BC025526">
    <property type="protein sequence ID" value="AAH25526.1"/>
    <property type="status" value="ALT_INIT"/>
    <property type="molecule type" value="mRNA"/>
</dbReference>
<dbReference type="EMBL" id="BC050199">
    <property type="protein sequence ID" value="AAH50199.1"/>
    <property type="molecule type" value="mRNA"/>
</dbReference>
<dbReference type="EMBL" id="BC096591">
    <property type="protein sequence ID" value="AAH96591.1"/>
    <property type="molecule type" value="mRNA"/>
</dbReference>
<dbReference type="EMBL" id="AK052272">
    <property type="protein sequence ID" value="BAC34911.1"/>
    <property type="molecule type" value="mRNA"/>
</dbReference>
<dbReference type="CCDS" id="CCDS15878.1"/>
<dbReference type="RefSeq" id="NP_938046.2">
    <property type="nucleotide sequence ID" value="NM_198304.2"/>
</dbReference>
<dbReference type="SMR" id="Q6ZQH8"/>
<dbReference type="BioGRID" id="230667">
    <property type="interactions" value="28"/>
</dbReference>
<dbReference type="ComplexPortal" id="CPX-4474">
    <property type="entry name" value="Nuclear pore complex"/>
</dbReference>
<dbReference type="FunCoup" id="Q6ZQH8">
    <property type="interactions" value="3465"/>
</dbReference>
<dbReference type="IntAct" id="Q6ZQH8">
    <property type="interactions" value="23"/>
</dbReference>
<dbReference type="MINT" id="Q6ZQH8"/>
<dbReference type="STRING" id="10090.ENSMUSP00000065836"/>
<dbReference type="GlyGen" id="Q6ZQH8">
    <property type="glycosylation" value="11 sites, 1 O-linked glycan (10 sites)"/>
</dbReference>
<dbReference type="iPTMnet" id="Q6ZQH8"/>
<dbReference type="PhosphoSitePlus" id="Q6ZQH8"/>
<dbReference type="SwissPalm" id="Q6ZQH8"/>
<dbReference type="jPOST" id="Q6ZQH8"/>
<dbReference type="PaxDb" id="10090-ENSMUSP00000065836"/>
<dbReference type="PeptideAtlas" id="Q6ZQH8"/>
<dbReference type="ProteomicsDB" id="253036"/>
<dbReference type="Pumba" id="Q6ZQH8"/>
<dbReference type="Antibodypedia" id="34836">
    <property type="antibodies" value="83 antibodies from 12 providers"/>
</dbReference>
<dbReference type="DNASU" id="227699"/>
<dbReference type="Ensembl" id="ENSMUST00000064447.12">
    <property type="protein sequence ID" value="ENSMUSP00000065836.6"/>
    <property type="gene ID" value="ENSMUSG00000052533.15"/>
</dbReference>
<dbReference type="GeneID" id="227699"/>
<dbReference type="KEGG" id="mmu:227699"/>
<dbReference type="UCSC" id="uc008jcb.1">
    <property type="organism name" value="mouse"/>
</dbReference>
<dbReference type="AGR" id="MGI:2446190"/>
<dbReference type="CTD" id="23511"/>
<dbReference type="MGI" id="MGI:2446190">
    <property type="gene designation" value="Nup188"/>
</dbReference>
<dbReference type="VEuPathDB" id="HostDB:ENSMUSG00000052533"/>
<dbReference type="eggNOG" id="KOG4833">
    <property type="taxonomic scope" value="Eukaryota"/>
</dbReference>
<dbReference type="GeneTree" id="ENSGT00390000005742"/>
<dbReference type="HOGENOM" id="CLU_002623_1_0_1"/>
<dbReference type="InParanoid" id="Q6ZQH8"/>
<dbReference type="OMA" id="PMAEMNF"/>
<dbReference type="OrthoDB" id="102511at2759"/>
<dbReference type="PhylomeDB" id="Q6ZQH8"/>
<dbReference type="TreeFam" id="TF101106"/>
<dbReference type="Reactome" id="R-MMU-159227">
    <property type="pathway name" value="Transport of the SLBP independent Mature mRNA"/>
</dbReference>
<dbReference type="Reactome" id="R-MMU-159230">
    <property type="pathway name" value="Transport of the SLBP Dependant Mature mRNA"/>
</dbReference>
<dbReference type="Reactome" id="R-MMU-159231">
    <property type="pathway name" value="Transport of Mature mRNA Derived from an Intronless Transcript"/>
</dbReference>
<dbReference type="Reactome" id="R-MMU-159236">
    <property type="pathway name" value="Transport of Mature mRNA derived from an Intron-Containing Transcript"/>
</dbReference>
<dbReference type="Reactome" id="R-MMU-170822">
    <property type="pathway name" value="Regulation of Glucokinase by Glucokinase Regulatory Protein"/>
</dbReference>
<dbReference type="Reactome" id="R-MMU-191859">
    <property type="pathway name" value="snRNP Assembly"/>
</dbReference>
<dbReference type="Reactome" id="R-MMU-3108214">
    <property type="pathway name" value="SUMOylation of DNA damage response and repair proteins"/>
</dbReference>
<dbReference type="Reactome" id="R-MMU-3232142">
    <property type="pathway name" value="SUMOylation of ubiquitinylation proteins"/>
</dbReference>
<dbReference type="Reactome" id="R-MMU-3301854">
    <property type="pathway name" value="Nuclear Pore Complex (NPC) Disassembly"/>
</dbReference>
<dbReference type="Reactome" id="R-MMU-3371453">
    <property type="pathway name" value="Regulation of HSF1-mediated heat shock response"/>
</dbReference>
<dbReference type="Reactome" id="R-MMU-4085377">
    <property type="pathway name" value="SUMOylation of SUMOylation proteins"/>
</dbReference>
<dbReference type="Reactome" id="R-MMU-4551638">
    <property type="pathway name" value="SUMOylation of chromatin organization proteins"/>
</dbReference>
<dbReference type="Reactome" id="R-MMU-4570464">
    <property type="pathway name" value="SUMOylation of RNA binding proteins"/>
</dbReference>
<dbReference type="Reactome" id="R-MMU-4615885">
    <property type="pathway name" value="SUMOylation of DNA replication proteins"/>
</dbReference>
<dbReference type="Reactome" id="R-MMU-5578749">
    <property type="pathway name" value="Transcriptional regulation by small RNAs"/>
</dbReference>
<dbReference type="Reactome" id="R-MMU-9615933">
    <property type="pathway name" value="Postmitotic nuclear pore complex (NPC) reformation"/>
</dbReference>
<dbReference type="BioGRID-ORCS" id="227699">
    <property type="hits" value="22 hits in 77 CRISPR screens"/>
</dbReference>
<dbReference type="ChiTaRS" id="Nup188">
    <property type="organism name" value="mouse"/>
</dbReference>
<dbReference type="PRO" id="PR:Q6ZQH8"/>
<dbReference type="Proteomes" id="UP000000589">
    <property type="component" value="Chromosome 2"/>
</dbReference>
<dbReference type="RNAct" id="Q6ZQH8">
    <property type="molecule type" value="protein"/>
</dbReference>
<dbReference type="Bgee" id="ENSMUSG00000052533">
    <property type="expression patterns" value="Expressed in spermatocyte and 182 other cell types or tissues"/>
</dbReference>
<dbReference type="ExpressionAtlas" id="Q6ZQH8">
    <property type="expression patterns" value="baseline and differential"/>
</dbReference>
<dbReference type="GO" id="GO:0005635">
    <property type="term" value="C:nuclear envelope"/>
    <property type="evidence" value="ECO:0000266"/>
    <property type="project" value="ComplexPortal"/>
</dbReference>
<dbReference type="GO" id="GO:0005643">
    <property type="term" value="C:nuclear pore"/>
    <property type="evidence" value="ECO:0000303"/>
    <property type="project" value="ComplexPortal"/>
</dbReference>
<dbReference type="GO" id="GO:0017056">
    <property type="term" value="F:structural constituent of nuclear pore"/>
    <property type="evidence" value="ECO:0007669"/>
    <property type="project" value="InterPro"/>
</dbReference>
<dbReference type="GO" id="GO:0051028">
    <property type="term" value="P:mRNA transport"/>
    <property type="evidence" value="ECO:0007669"/>
    <property type="project" value="UniProtKB-KW"/>
</dbReference>
<dbReference type="GO" id="GO:0006913">
    <property type="term" value="P:nucleocytoplasmic transport"/>
    <property type="evidence" value="ECO:0000303"/>
    <property type="project" value="ComplexPortal"/>
</dbReference>
<dbReference type="GO" id="GO:0006606">
    <property type="term" value="P:protein import into nucleus"/>
    <property type="evidence" value="ECO:0007669"/>
    <property type="project" value="Ensembl"/>
</dbReference>
<dbReference type="InterPro" id="IPR016024">
    <property type="entry name" value="ARM-type_fold"/>
</dbReference>
<dbReference type="InterPro" id="IPR018864">
    <property type="entry name" value="Nucleoporin_Nup188_N"/>
</dbReference>
<dbReference type="InterPro" id="IPR044840">
    <property type="entry name" value="Nup188"/>
</dbReference>
<dbReference type="InterPro" id="IPR048883">
    <property type="entry name" value="Nup188_N-subdom_III"/>
</dbReference>
<dbReference type="PANTHER" id="PTHR31431:SF1">
    <property type="entry name" value="NUCLEOPORIN NUP188"/>
    <property type="match status" value="1"/>
</dbReference>
<dbReference type="PANTHER" id="PTHR31431">
    <property type="entry name" value="NUCLEOPORIN NUP188 HOMOLOG"/>
    <property type="match status" value="1"/>
</dbReference>
<dbReference type="Pfam" id="PF10487">
    <property type="entry name" value="Nup188_N"/>
    <property type="match status" value="1"/>
</dbReference>
<dbReference type="Pfam" id="PF21093">
    <property type="entry name" value="Nup188_N-subdom_III"/>
    <property type="match status" value="1"/>
</dbReference>
<dbReference type="Pfam" id="PF21094">
    <property type="entry name" value="Nup188_SH3-like"/>
    <property type="match status" value="1"/>
</dbReference>
<dbReference type="SUPFAM" id="SSF48371">
    <property type="entry name" value="ARM repeat"/>
    <property type="match status" value="1"/>
</dbReference>
<protein>
    <recommendedName>
        <fullName evidence="3">Nucleoporin NUP188</fullName>
    </recommendedName>
</protein>
<keyword id="KW-0007">Acetylation</keyword>
<keyword id="KW-0903">Direct protein sequencing</keyword>
<keyword id="KW-0509">mRNA transport</keyword>
<keyword id="KW-0906">Nuclear pore complex</keyword>
<keyword id="KW-0539">Nucleus</keyword>
<keyword id="KW-0597">Phosphoprotein</keyword>
<keyword id="KW-0653">Protein transport</keyword>
<keyword id="KW-1185">Reference proteome</keyword>
<keyword id="KW-0811">Translocation</keyword>
<keyword id="KW-0813">Transport</keyword>
<comment type="function">
    <text evidence="1">Component of the nuclear pore complex (NPC), a complex required for the trafficking across the nuclear envelope. Required for proper protein transport into the nucleus.</text>
</comment>
<comment type="subunit">
    <text evidence="1">Part of the nuclear pore complex (NPC).</text>
</comment>
<comment type="subcellular location">
    <subcellularLocation>
        <location evidence="1">Nucleus</location>
        <location evidence="1">Nuclear pore complex</location>
    </subcellularLocation>
</comment>
<comment type="similarity">
    <text evidence="3">Belongs to the Nup188 family.</text>
</comment>
<comment type="sequence caution" evidence="3">
    <conflict type="erroneous initiation">
        <sequence resource="EMBL-CDS" id="AAH25526"/>
    </conflict>
</comment>
<comment type="sequence caution" evidence="3">
    <conflict type="erroneous initiation">
        <sequence resource="EMBL-CDS" id="BAC97883"/>
    </conflict>
</comment>
<reference key="1">
    <citation type="journal article" date="2003" name="DNA Res.">
        <title>Prediction of the coding sequences of mouse homologues of KIAA gene: III. The complete nucleotide sequences of 500 mouse KIAA-homologous cDNAs identified by screening of terminal sequences of cDNA clones randomly sampled from size-fractionated libraries.</title>
        <authorList>
            <person name="Okazaki N."/>
            <person name="Kikuno R."/>
            <person name="Ohara R."/>
            <person name="Inamoto S."/>
            <person name="Koseki H."/>
            <person name="Hiraoka S."/>
            <person name="Saga Y."/>
            <person name="Nagase T."/>
            <person name="Ohara O."/>
            <person name="Koga H."/>
        </authorList>
    </citation>
    <scope>NUCLEOTIDE SEQUENCE [LARGE SCALE MRNA]</scope>
    <source>
        <tissue>Embryo</tissue>
    </source>
</reference>
<reference key="2">
    <citation type="journal article" date="2009" name="PLoS Biol.">
        <title>Lineage-specific biology revealed by a finished genome assembly of the mouse.</title>
        <authorList>
            <person name="Church D.M."/>
            <person name="Goodstadt L."/>
            <person name="Hillier L.W."/>
            <person name="Zody M.C."/>
            <person name="Goldstein S."/>
            <person name="She X."/>
            <person name="Bult C.J."/>
            <person name="Agarwala R."/>
            <person name="Cherry J.L."/>
            <person name="DiCuccio M."/>
            <person name="Hlavina W."/>
            <person name="Kapustin Y."/>
            <person name="Meric P."/>
            <person name="Maglott D."/>
            <person name="Birtle Z."/>
            <person name="Marques A.C."/>
            <person name="Graves T."/>
            <person name="Zhou S."/>
            <person name="Teague B."/>
            <person name="Potamousis K."/>
            <person name="Churas C."/>
            <person name="Place M."/>
            <person name="Herschleb J."/>
            <person name="Runnheim R."/>
            <person name="Forrest D."/>
            <person name="Amos-Landgraf J."/>
            <person name="Schwartz D.C."/>
            <person name="Cheng Z."/>
            <person name="Lindblad-Toh K."/>
            <person name="Eichler E.E."/>
            <person name="Ponting C.P."/>
        </authorList>
    </citation>
    <scope>NUCLEOTIDE SEQUENCE [LARGE SCALE GENOMIC DNA]</scope>
    <source>
        <strain>C57BL/6J</strain>
    </source>
</reference>
<reference key="3">
    <citation type="journal article" date="2004" name="Genome Res.">
        <title>The status, quality, and expansion of the NIH full-length cDNA project: the Mammalian Gene Collection (MGC).</title>
        <authorList>
            <consortium name="The MGC Project Team"/>
        </authorList>
    </citation>
    <scope>NUCLEOTIDE SEQUENCE [LARGE SCALE MRNA]</scope>
    <source>
        <strain>B5/EGFP</strain>
        <strain>FVB/N</strain>
        <strain>NMRI</strain>
        <tissue>Mammary tumor</tissue>
        <tissue>Trophoblast stem cell</tissue>
    </source>
</reference>
<reference key="4">
    <citation type="journal article" date="2005" name="Science">
        <title>The transcriptional landscape of the mammalian genome.</title>
        <authorList>
            <person name="Carninci P."/>
            <person name="Kasukawa T."/>
            <person name="Katayama S."/>
            <person name="Gough J."/>
            <person name="Frith M.C."/>
            <person name="Maeda N."/>
            <person name="Oyama R."/>
            <person name="Ravasi T."/>
            <person name="Lenhard B."/>
            <person name="Wells C."/>
            <person name="Kodzius R."/>
            <person name="Shimokawa K."/>
            <person name="Bajic V.B."/>
            <person name="Brenner S.E."/>
            <person name="Batalov S."/>
            <person name="Forrest A.R."/>
            <person name="Zavolan M."/>
            <person name="Davis M.J."/>
            <person name="Wilming L.G."/>
            <person name="Aidinis V."/>
            <person name="Allen J.E."/>
            <person name="Ambesi-Impiombato A."/>
            <person name="Apweiler R."/>
            <person name="Aturaliya R.N."/>
            <person name="Bailey T.L."/>
            <person name="Bansal M."/>
            <person name="Baxter L."/>
            <person name="Beisel K.W."/>
            <person name="Bersano T."/>
            <person name="Bono H."/>
            <person name="Chalk A.M."/>
            <person name="Chiu K.P."/>
            <person name="Choudhary V."/>
            <person name="Christoffels A."/>
            <person name="Clutterbuck D.R."/>
            <person name="Crowe M.L."/>
            <person name="Dalla E."/>
            <person name="Dalrymple B.P."/>
            <person name="de Bono B."/>
            <person name="Della Gatta G."/>
            <person name="di Bernardo D."/>
            <person name="Down T."/>
            <person name="Engstrom P."/>
            <person name="Fagiolini M."/>
            <person name="Faulkner G."/>
            <person name="Fletcher C.F."/>
            <person name="Fukushima T."/>
            <person name="Furuno M."/>
            <person name="Futaki S."/>
            <person name="Gariboldi M."/>
            <person name="Georgii-Hemming P."/>
            <person name="Gingeras T.R."/>
            <person name="Gojobori T."/>
            <person name="Green R.E."/>
            <person name="Gustincich S."/>
            <person name="Harbers M."/>
            <person name="Hayashi Y."/>
            <person name="Hensch T.K."/>
            <person name="Hirokawa N."/>
            <person name="Hill D."/>
            <person name="Huminiecki L."/>
            <person name="Iacono M."/>
            <person name="Ikeo K."/>
            <person name="Iwama A."/>
            <person name="Ishikawa T."/>
            <person name="Jakt M."/>
            <person name="Kanapin A."/>
            <person name="Katoh M."/>
            <person name="Kawasawa Y."/>
            <person name="Kelso J."/>
            <person name="Kitamura H."/>
            <person name="Kitano H."/>
            <person name="Kollias G."/>
            <person name="Krishnan S.P."/>
            <person name="Kruger A."/>
            <person name="Kummerfeld S.K."/>
            <person name="Kurochkin I.V."/>
            <person name="Lareau L.F."/>
            <person name="Lazarevic D."/>
            <person name="Lipovich L."/>
            <person name="Liu J."/>
            <person name="Liuni S."/>
            <person name="McWilliam S."/>
            <person name="Madan Babu M."/>
            <person name="Madera M."/>
            <person name="Marchionni L."/>
            <person name="Matsuda H."/>
            <person name="Matsuzawa S."/>
            <person name="Miki H."/>
            <person name="Mignone F."/>
            <person name="Miyake S."/>
            <person name="Morris K."/>
            <person name="Mottagui-Tabar S."/>
            <person name="Mulder N."/>
            <person name="Nakano N."/>
            <person name="Nakauchi H."/>
            <person name="Ng P."/>
            <person name="Nilsson R."/>
            <person name="Nishiguchi S."/>
            <person name="Nishikawa S."/>
            <person name="Nori F."/>
            <person name="Ohara O."/>
            <person name="Okazaki Y."/>
            <person name="Orlando V."/>
            <person name="Pang K.C."/>
            <person name="Pavan W.J."/>
            <person name="Pavesi G."/>
            <person name="Pesole G."/>
            <person name="Petrovsky N."/>
            <person name="Piazza S."/>
            <person name="Reed J."/>
            <person name="Reid J.F."/>
            <person name="Ring B.Z."/>
            <person name="Ringwald M."/>
            <person name="Rost B."/>
            <person name="Ruan Y."/>
            <person name="Salzberg S.L."/>
            <person name="Sandelin A."/>
            <person name="Schneider C."/>
            <person name="Schoenbach C."/>
            <person name="Sekiguchi K."/>
            <person name="Semple C.A."/>
            <person name="Seno S."/>
            <person name="Sessa L."/>
            <person name="Sheng Y."/>
            <person name="Shibata Y."/>
            <person name="Shimada H."/>
            <person name="Shimada K."/>
            <person name="Silva D."/>
            <person name="Sinclair B."/>
            <person name="Sperling S."/>
            <person name="Stupka E."/>
            <person name="Sugiura K."/>
            <person name="Sultana R."/>
            <person name="Takenaka Y."/>
            <person name="Taki K."/>
            <person name="Tammoja K."/>
            <person name="Tan S.L."/>
            <person name="Tang S."/>
            <person name="Taylor M.S."/>
            <person name="Tegner J."/>
            <person name="Teichmann S.A."/>
            <person name="Ueda H.R."/>
            <person name="van Nimwegen E."/>
            <person name="Verardo R."/>
            <person name="Wei C.L."/>
            <person name="Yagi K."/>
            <person name="Yamanishi H."/>
            <person name="Zabarovsky E."/>
            <person name="Zhu S."/>
            <person name="Zimmer A."/>
            <person name="Hide W."/>
            <person name="Bult C."/>
            <person name="Grimmond S.M."/>
            <person name="Teasdale R.D."/>
            <person name="Liu E.T."/>
            <person name="Brusic V."/>
            <person name="Quackenbush J."/>
            <person name="Wahlestedt C."/>
            <person name="Mattick J.S."/>
            <person name="Hume D.A."/>
            <person name="Kai C."/>
            <person name="Sasaki D."/>
            <person name="Tomaru Y."/>
            <person name="Fukuda S."/>
            <person name="Kanamori-Katayama M."/>
            <person name="Suzuki M."/>
            <person name="Aoki J."/>
            <person name="Arakawa T."/>
            <person name="Iida J."/>
            <person name="Imamura K."/>
            <person name="Itoh M."/>
            <person name="Kato T."/>
            <person name="Kawaji H."/>
            <person name="Kawagashira N."/>
            <person name="Kawashima T."/>
            <person name="Kojima M."/>
            <person name="Kondo S."/>
            <person name="Konno H."/>
            <person name="Nakano K."/>
            <person name="Ninomiya N."/>
            <person name="Nishio T."/>
            <person name="Okada M."/>
            <person name="Plessy C."/>
            <person name="Shibata K."/>
            <person name="Shiraki T."/>
            <person name="Suzuki S."/>
            <person name="Tagami M."/>
            <person name="Waki K."/>
            <person name="Watahiki A."/>
            <person name="Okamura-Oho Y."/>
            <person name="Suzuki H."/>
            <person name="Kawai J."/>
            <person name="Hayashizaki Y."/>
        </authorList>
    </citation>
    <scope>NUCLEOTIDE SEQUENCE [LARGE SCALE MRNA] OF 1-798</scope>
    <source>
        <strain>C57BL/6J</strain>
        <tissue>Heart</tissue>
    </source>
</reference>
<reference key="5">
    <citation type="submission" date="2009-01" db="UniProtKB">
        <authorList>
            <person name="Lubec G."/>
            <person name="Sunyer B."/>
            <person name="Chen W.-Q."/>
        </authorList>
    </citation>
    <scope>PROTEIN SEQUENCE OF 1061-1070</scope>
    <scope>IDENTIFICATION BY MASS SPECTROMETRY</scope>
    <source>
        <strain>OF1</strain>
        <tissue>Hippocampus</tissue>
    </source>
</reference>
<reference key="6">
    <citation type="journal article" date="2010" name="Cell">
        <title>A tissue-specific atlas of mouse protein phosphorylation and expression.</title>
        <authorList>
            <person name="Huttlin E.L."/>
            <person name="Jedrychowski M.P."/>
            <person name="Elias J.E."/>
            <person name="Goswami T."/>
            <person name="Rad R."/>
            <person name="Beausoleil S.A."/>
            <person name="Villen J."/>
            <person name="Haas W."/>
            <person name="Sowa M.E."/>
            <person name="Gygi S.P."/>
        </authorList>
    </citation>
    <scope>PHOSPHORYLATION [LARGE SCALE ANALYSIS] AT SER-1719 AND SER-1727</scope>
    <scope>IDENTIFICATION BY MASS SPECTROMETRY [LARGE SCALE ANALYSIS]</scope>
    <source>
        <tissue>Kidney</tissue>
        <tissue>Liver</tissue>
        <tissue>Lung</tissue>
        <tissue>Pancreas</tissue>
        <tissue>Spleen</tissue>
        <tissue>Testis</tissue>
    </source>
</reference>
<sequence>MAAAAGGPCVRSSRELWTILLGRSALRELNQIEAELNKYWQRLLEGLSYYKPPSPSSAERVKANKDVASPLKELGLRVSKFLGLDEEQSVQLLQCYLQEDYRGTRDSLKTVLQDERQSQALTLKIADYYYEERTCILRCVLHLLTYFQDERHPYRAEYADCVDKLEKELVLKYRQQFEELYRTEAPTWETHGNLMTERQVSRWLVQCLREQSMLLEIIFLYYAYFEMAPSDLLVLTKMFKEQGFGSRQTSRHLVGGTMDPFVDRIGYFSALILVEGMDIESLHKYALDDRRELHQFAQDGLICQDMDRAMLTLGDIPHHAPVLLAWALLRHTLSPEETSSVVRKIGGTAIQLNVFQYLTRLLRSLASGGNDCTTSTACMCVYGLLSFALTSLELHTLGNQQDVIDTACEVLADPSLPELFWGTEPTSGLGIILDSVCGMFPHLLSPLLQLLRALVSGKSTAKKVYSFLDKMSFYNELHKHKPHDVLSHEDGTLWRRQTPKLLYPLGGQTNLRIPQGTVGQVMLDDRAYLVRWEYSYSSWTLFTCEIEMLLHVVSTADVIQHCQRVKPIIDLVHKVISTDLSIADCLLPITSRIYMLLQRLTTVISPPVNVIASCVNCLTVLAARNPAKVWTDLRHTGFLPFVAHPVSNMTQMISAEGMNAGGYGSLLMNSEQPQGEYGVTIAFLRLVTTLVKGQLGSTQSQGLVPCVMFVLKEMLPSYHKWRYNSHGVRELIGCLILELIHAILNLCQETELHSSHTPSLPSLCICSLAYTEAGQTVISIMGIGVDTIDMVMAAQPRSDGPEGQGQGQLLIKTVKLAFSVTNNVIRLKPPSNVVSPLEQALTQHGAHGNNLIAVLAKYIYHRHDPALPRLAIQLLKRLATVAPMSVYACLGSDAAAIRDAFLTRLQSKIEDMRIKVMILEFLTVAVETQPGLIELFLNLEVKDGSNGSKEFSLGVWSCLHVVLELIDSQQQDRYWCPPLLHRAAIAFLHALWQDRRDSAMLVLRTKPKFWENLTSPLFGTLSPPSETSEPSVLETCALIMKIICLEIYYVVKGSLDQSLKDTLKKFSSEKRFAYWSGYVKSLAVYMADTEGSSCTSLLEYQMLVSAWRILLIIAASHADVMHLTDMAVRRQLFLDVLDGTKALLLVAASVNCLRLGSMMCTLLLILLRQWKRELGAVEKILGPLTEILEGVLQADQQLMEKTKAKVFSAFITVLQMKELRVGDIPQYSQLVLNVCETLQEEVIALFDQTRHSLASDSAAEDKDSMETDDCPRPRHKDQRDGVCVLGLHLAKELCEVDEDGDSWLQVTRRLPILPTLLTTLEVSLRMKQNLHFTEAALHLLLTLARTQQGATAVAGAGITQSICLPLLSVYQLSSNGTGQTPSTSRKSLDAPSWPGVYRLSMSLMERLLKTLRYNFLTEALDFVGVHQERTLQCLNAVKTVQSLACLEEADHTVGFILQLSHFRKEWHFHLPQLMRDVQVNLGYLCQACTSLLHSRKMLQHYLQNKNGDGLPSAVTPRAQRPSTTTTTTTTTTALATPAGCSSKQPTADTEASEQRALHTVQYGLLKILSRTLAALRHFTPDVCQILLDQSLDLAEYNFLFALSFTTPTFDSEVAPSFGTLLATVNVALNMLGELDKKKESLTQAVGLSTQAEGTRTLKSLLMFTMENCFYLLISQAVRYLRDPAVHPRDKQRMKQELSSELSTLLSSLSRYFRRGAPSSPAAGVLPSPQGKATSLSKASPESQEPLIQLVQAFVRHVQR</sequence>
<organism>
    <name type="scientific">Mus musculus</name>
    <name type="common">Mouse</name>
    <dbReference type="NCBI Taxonomy" id="10090"/>
    <lineage>
        <taxon>Eukaryota</taxon>
        <taxon>Metazoa</taxon>
        <taxon>Chordata</taxon>
        <taxon>Craniata</taxon>
        <taxon>Vertebrata</taxon>
        <taxon>Euteleostomi</taxon>
        <taxon>Mammalia</taxon>
        <taxon>Eutheria</taxon>
        <taxon>Euarchontoglires</taxon>
        <taxon>Glires</taxon>
        <taxon>Rodentia</taxon>
        <taxon>Myomorpha</taxon>
        <taxon>Muroidea</taxon>
        <taxon>Muridae</taxon>
        <taxon>Murinae</taxon>
        <taxon>Mus</taxon>
        <taxon>Mus</taxon>
    </lineage>
</organism>
<evidence type="ECO:0000250" key="1">
    <source>
        <dbReference type="UniProtKB" id="Q5SRE5"/>
    </source>
</evidence>
<evidence type="ECO:0000256" key="2">
    <source>
        <dbReference type="SAM" id="MobiDB-lite"/>
    </source>
</evidence>
<evidence type="ECO:0000305" key="3"/>
<evidence type="ECO:0007744" key="4">
    <source>
    </source>
</evidence>
<gene>
    <name type="primary">Nup188</name>
    <name type="synonym">Kiaa0169</name>
</gene>
<name>NU188_MOUSE</name>
<feature type="initiator methionine" description="Removed" evidence="1">
    <location>
        <position position="1"/>
    </location>
</feature>
<feature type="chain" id="PRO_0000299173" description="Nucleoporin NUP188">
    <location>
        <begin position="2"/>
        <end position="1759"/>
    </location>
</feature>
<feature type="region of interest" description="Disordered" evidence="2">
    <location>
        <begin position="1255"/>
        <end position="1277"/>
    </location>
</feature>
<feature type="region of interest" description="Disordered" evidence="2">
    <location>
        <begin position="1508"/>
        <end position="1552"/>
    </location>
</feature>
<feature type="region of interest" description="Disordered" evidence="2">
    <location>
        <begin position="1718"/>
        <end position="1743"/>
    </location>
</feature>
<feature type="compositionally biased region" description="Basic and acidic residues" evidence="2">
    <location>
        <begin position="1259"/>
        <end position="1277"/>
    </location>
</feature>
<feature type="compositionally biased region" description="Low complexity" evidence="2">
    <location>
        <begin position="1523"/>
        <end position="1532"/>
    </location>
</feature>
<feature type="compositionally biased region" description="Polar residues" evidence="2">
    <location>
        <begin position="1539"/>
        <end position="1549"/>
    </location>
</feature>
<feature type="compositionally biased region" description="Polar residues" evidence="2">
    <location>
        <begin position="1730"/>
        <end position="1742"/>
    </location>
</feature>
<feature type="modified residue" description="N-acetylalanine" evidence="1">
    <location>
        <position position="2"/>
    </location>
</feature>
<feature type="modified residue" description="Phosphoserine" evidence="4">
    <location>
        <position position="1719"/>
    </location>
</feature>
<feature type="modified residue" description="Phosphoserine" evidence="4">
    <location>
        <position position="1727"/>
    </location>
</feature>
<feature type="sequence conflict" description="In Ref. 4; BAC34911." evidence="3" ref="4">
    <original>S</original>
    <variation>R</variation>
    <location>
        <position position="798"/>
    </location>
</feature>